<name>FETP_CUPMC</name>
<feature type="chain" id="PRO_0000246113" description="Probable Fe(2+)-trafficking protein">
    <location>
        <begin position="1"/>
        <end position="91"/>
    </location>
</feature>
<organism>
    <name type="scientific">Cupriavidus metallidurans (strain ATCC 43123 / DSM 2839 / NBRC 102507 / CH34)</name>
    <name type="common">Ralstonia metallidurans</name>
    <dbReference type="NCBI Taxonomy" id="266264"/>
    <lineage>
        <taxon>Bacteria</taxon>
        <taxon>Pseudomonadati</taxon>
        <taxon>Pseudomonadota</taxon>
        <taxon>Betaproteobacteria</taxon>
        <taxon>Burkholderiales</taxon>
        <taxon>Burkholderiaceae</taxon>
        <taxon>Cupriavidus</taxon>
    </lineage>
</organism>
<keyword id="KW-0408">Iron</keyword>
<keyword id="KW-1185">Reference proteome</keyword>
<reference key="1">
    <citation type="journal article" date="2010" name="PLoS ONE">
        <title>The complete genome sequence of Cupriavidus metallidurans strain CH34, a master survivalist in harsh and anthropogenic environments.</title>
        <authorList>
            <person name="Janssen P.J."/>
            <person name="Van Houdt R."/>
            <person name="Moors H."/>
            <person name="Monsieurs P."/>
            <person name="Morin N."/>
            <person name="Michaux A."/>
            <person name="Benotmane M.A."/>
            <person name="Leys N."/>
            <person name="Vallaeys T."/>
            <person name="Lapidus A."/>
            <person name="Monchy S."/>
            <person name="Medigue C."/>
            <person name="Taghavi S."/>
            <person name="McCorkle S."/>
            <person name="Dunn J."/>
            <person name="van der Lelie D."/>
            <person name="Mergeay M."/>
        </authorList>
    </citation>
    <scope>NUCLEOTIDE SEQUENCE [LARGE SCALE GENOMIC DNA]</scope>
    <source>
        <strain>ATCC 43123 / DSM 2839 / NBRC 102507 / CH34</strain>
    </source>
</reference>
<protein>
    <recommendedName>
        <fullName evidence="1">Probable Fe(2+)-trafficking protein</fullName>
    </recommendedName>
</protein>
<dbReference type="EMBL" id="CP000352">
    <property type="protein sequence ID" value="ABF08950.1"/>
    <property type="status" value="ALT_INIT"/>
    <property type="molecule type" value="Genomic_DNA"/>
</dbReference>
<dbReference type="RefSeq" id="WP_024570137.1">
    <property type="nucleotide sequence ID" value="NC_007973.1"/>
</dbReference>
<dbReference type="SMR" id="Q1LLM6"/>
<dbReference type="STRING" id="266264.Rmet_2071"/>
<dbReference type="KEGG" id="rme:Rmet_2071"/>
<dbReference type="eggNOG" id="COG2924">
    <property type="taxonomic scope" value="Bacteria"/>
</dbReference>
<dbReference type="HOGENOM" id="CLU_170994_0_0_4"/>
<dbReference type="Proteomes" id="UP000002429">
    <property type="component" value="Chromosome"/>
</dbReference>
<dbReference type="GO" id="GO:0005829">
    <property type="term" value="C:cytosol"/>
    <property type="evidence" value="ECO:0007669"/>
    <property type="project" value="TreeGrafter"/>
</dbReference>
<dbReference type="GO" id="GO:0005506">
    <property type="term" value="F:iron ion binding"/>
    <property type="evidence" value="ECO:0007669"/>
    <property type="project" value="UniProtKB-UniRule"/>
</dbReference>
<dbReference type="GO" id="GO:0034599">
    <property type="term" value="P:cellular response to oxidative stress"/>
    <property type="evidence" value="ECO:0007669"/>
    <property type="project" value="TreeGrafter"/>
</dbReference>
<dbReference type="FunFam" id="1.10.3880.10:FF:000001">
    <property type="entry name" value="Probable Fe(2+)-trafficking protein"/>
    <property type="match status" value="1"/>
</dbReference>
<dbReference type="Gene3D" id="1.10.3880.10">
    <property type="entry name" value="Fe(II) trafficking protein YggX"/>
    <property type="match status" value="1"/>
</dbReference>
<dbReference type="HAMAP" id="MF_00686">
    <property type="entry name" value="Fe_traffic_YggX"/>
    <property type="match status" value="1"/>
</dbReference>
<dbReference type="InterPro" id="IPR007457">
    <property type="entry name" value="Fe_traffick_prot_YggX"/>
</dbReference>
<dbReference type="InterPro" id="IPR036766">
    <property type="entry name" value="Fe_traffick_prot_YggX_sf"/>
</dbReference>
<dbReference type="NCBIfam" id="NF003817">
    <property type="entry name" value="PRK05408.1"/>
    <property type="match status" value="1"/>
</dbReference>
<dbReference type="PANTHER" id="PTHR36965">
    <property type="entry name" value="FE(2+)-TRAFFICKING PROTEIN-RELATED"/>
    <property type="match status" value="1"/>
</dbReference>
<dbReference type="PANTHER" id="PTHR36965:SF1">
    <property type="entry name" value="FE(2+)-TRAFFICKING PROTEIN-RELATED"/>
    <property type="match status" value="1"/>
</dbReference>
<dbReference type="Pfam" id="PF04362">
    <property type="entry name" value="Iron_traffic"/>
    <property type="match status" value="1"/>
</dbReference>
<dbReference type="PIRSF" id="PIRSF029827">
    <property type="entry name" value="Fe_traffic_YggX"/>
    <property type="match status" value="1"/>
</dbReference>
<dbReference type="SUPFAM" id="SSF111148">
    <property type="entry name" value="YggX-like"/>
    <property type="match status" value="1"/>
</dbReference>
<evidence type="ECO:0000255" key="1">
    <source>
        <dbReference type="HAMAP-Rule" id="MF_00686"/>
    </source>
</evidence>
<evidence type="ECO:0000305" key="2"/>
<proteinExistence type="inferred from homology"/>
<accession>Q1LLM6</accession>
<sequence>MARMVHCIKLNKEAEGLDFPPLPGDLGKKIWQNVSKEAWAGWLKHQTMLINENRLNMADPRARQYLIKQTEKYFFGDGADQAAGYVPPPAA</sequence>
<gene>
    <name type="ordered locus">Rmet_2071</name>
</gene>
<comment type="function">
    <text evidence="1">Could be a mediator in iron transactions between iron acquisition and iron-requiring processes, such as synthesis and/or repair of Fe-S clusters in biosynthetic enzymes.</text>
</comment>
<comment type="similarity">
    <text evidence="1">Belongs to the Fe(2+)-trafficking protein family.</text>
</comment>
<comment type="sequence caution" evidence="2">
    <conflict type="erroneous initiation">
        <sequence resource="EMBL-CDS" id="ABF08950"/>
    </conflict>
</comment>